<accession>A8GPC4</accession>
<protein>
    <recommendedName>
        <fullName evidence="1">Small ribosomal subunit protein bS20</fullName>
    </recommendedName>
    <alternativeName>
        <fullName evidence="2">30S ribosomal protein S20</fullName>
    </alternativeName>
</protein>
<dbReference type="EMBL" id="CP000847">
    <property type="protein sequence ID" value="ABV75249.1"/>
    <property type="molecule type" value="Genomic_DNA"/>
</dbReference>
<dbReference type="RefSeq" id="WP_012149879.1">
    <property type="nucleotide sequence ID" value="NC_009881.1"/>
</dbReference>
<dbReference type="SMR" id="A8GPC4"/>
<dbReference type="STRING" id="293614.A1C_04975"/>
<dbReference type="KEGG" id="rak:A1C_04975"/>
<dbReference type="eggNOG" id="COG0268">
    <property type="taxonomic scope" value="Bacteria"/>
</dbReference>
<dbReference type="HOGENOM" id="CLU_160655_3_0_5"/>
<dbReference type="Proteomes" id="UP000006830">
    <property type="component" value="Chromosome"/>
</dbReference>
<dbReference type="GO" id="GO:0015935">
    <property type="term" value="C:small ribosomal subunit"/>
    <property type="evidence" value="ECO:0007669"/>
    <property type="project" value="TreeGrafter"/>
</dbReference>
<dbReference type="GO" id="GO:0070181">
    <property type="term" value="F:small ribosomal subunit rRNA binding"/>
    <property type="evidence" value="ECO:0007669"/>
    <property type="project" value="TreeGrafter"/>
</dbReference>
<dbReference type="GO" id="GO:0003735">
    <property type="term" value="F:structural constituent of ribosome"/>
    <property type="evidence" value="ECO:0007669"/>
    <property type="project" value="InterPro"/>
</dbReference>
<dbReference type="GO" id="GO:0006412">
    <property type="term" value="P:translation"/>
    <property type="evidence" value="ECO:0007669"/>
    <property type="project" value="UniProtKB-UniRule"/>
</dbReference>
<dbReference type="Gene3D" id="1.20.58.110">
    <property type="entry name" value="Ribosomal protein S20"/>
    <property type="match status" value="1"/>
</dbReference>
<dbReference type="HAMAP" id="MF_00500">
    <property type="entry name" value="Ribosomal_bS20"/>
    <property type="match status" value="1"/>
</dbReference>
<dbReference type="InterPro" id="IPR002583">
    <property type="entry name" value="Ribosomal_bS20"/>
</dbReference>
<dbReference type="InterPro" id="IPR036510">
    <property type="entry name" value="Ribosomal_bS20_sf"/>
</dbReference>
<dbReference type="NCBIfam" id="TIGR00029">
    <property type="entry name" value="S20"/>
    <property type="match status" value="1"/>
</dbReference>
<dbReference type="PANTHER" id="PTHR33398">
    <property type="entry name" value="30S RIBOSOMAL PROTEIN S20"/>
    <property type="match status" value="1"/>
</dbReference>
<dbReference type="PANTHER" id="PTHR33398:SF1">
    <property type="entry name" value="SMALL RIBOSOMAL SUBUNIT PROTEIN BS20C"/>
    <property type="match status" value="1"/>
</dbReference>
<dbReference type="Pfam" id="PF01649">
    <property type="entry name" value="Ribosomal_S20p"/>
    <property type="match status" value="1"/>
</dbReference>
<dbReference type="SUPFAM" id="SSF46992">
    <property type="entry name" value="Ribosomal protein S20"/>
    <property type="match status" value="1"/>
</dbReference>
<keyword id="KW-0687">Ribonucleoprotein</keyword>
<keyword id="KW-0689">Ribosomal protein</keyword>
<keyword id="KW-0694">RNA-binding</keyword>
<keyword id="KW-0699">rRNA-binding</keyword>
<evidence type="ECO:0000255" key="1">
    <source>
        <dbReference type="HAMAP-Rule" id="MF_00500"/>
    </source>
</evidence>
<evidence type="ECO:0000305" key="2"/>
<organism>
    <name type="scientific">Rickettsia akari (strain Hartford)</name>
    <dbReference type="NCBI Taxonomy" id="293614"/>
    <lineage>
        <taxon>Bacteria</taxon>
        <taxon>Pseudomonadati</taxon>
        <taxon>Pseudomonadota</taxon>
        <taxon>Alphaproteobacteria</taxon>
        <taxon>Rickettsiales</taxon>
        <taxon>Rickettsiaceae</taxon>
        <taxon>Rickettsieae</taxon>
        <taxon>Rickettsia</taxon>
        <taxon>spotted fever group</taxon>
    </lineage>
</organism>
<comment type="function">
    <text evidence="1">Binds directly to 16S ribosomal RNA.</text>
</comment>
<comment type="similarity">
    <text evidence="1">Belongs to the bacterial ribosomal protein bS20 family.</text>
</comment>
<name>RS20_RICAH</name>
<feature type="chain" id="PRO_1000014641" description="Small ribosomal subunit protein bS20">
    <location>
        <begin position="1"/>
        <end position="90"/>
    </location>
</feature>
<reference key="1">
    <citation type="submission" date="2007-09" db="EMBL/GenBank/DDBJ databases">
        <title>Complete genome sequence of Rickettsia akari.</title>
        <authorList>
            <person name="Madan A."/>
            <person name="Fahey J."/>
            <person name="Helton E."/>
            <person name="Ketteman M."/>
            <person name="Madan A."/>
            <person name="Rodrigues S."/>
            <person name="Sanchez A."/>
            <person name="Whiting M."/>
            <person name="Dasch G."/>
            <person name="Eremeeva M."/>
        </authorList>
    </citation>
    <scope>NUCLEOTIDE SEQUENCE [LARGE SCALE GENOMIC DNA]</scope>
    <source>
        <strain>Hartford</strain>
    </source>
</reference>
<gene>
    <name evidence="1" type="primary">rpsT</name>
    <name type="ordered locus">A1C_04975</name>
</gene>
<proteinExistence type="inferred from homology"/>
<sequence length="90" mass="9927">MANHSSAKKAARQTVKRTLINKARSSAIKTFIKKVVHEISLGNKENANLALSVAQSKIMQGVKKNIIKLNTASRKISRLSKQIKSLNESK</sequence>